<sequence>MMNRLLVFLMLGAAFMLVVSAIDQDANEDINKRGVPCLCDSDGPSVRGNTLSGIIWLAGCPSGWHNCKKHGPTIGWCCKQ</sequence>
<organism>
    <name type="scientific">Anemonia viridis</name>
    <name type="common">Snakelocks anemone</name>
    <dbReference type="NCBI Taxonomy" id="51769"/>
    <lineage>
        <taxon>Eukaryota</taxon>
        <taxon>Metazoa</taxon>
        <taxon>Cnidaria</taxon>
        <taxon>Anthozoa</taxon>
        <taxon>Hexacorallia</taxon>
        <taxon>Actiniaria</taxon>
        <taxon>Actiniidae</taxon>
        <taxon>Anemonia</taxon>
    </lineage>
</organism>
<protein>
    <recommendedName>
        <fullName evidence="7">Delta-actitoxin-Avd1c 2</fullName>
        <shortName evidence="7">Delta-AITX-Avd1c 2</shortName>
    </recommendedName>
    <alternativeName>
        <fullName>Anemonia viridis toxin 2</fullName>
        <shortName evidence="6">Av2</shortName>
        <shortName evidence="7">Avt 2</shortName>
    </alternativeName>
    <alternativeName>
        <fullName evidence="10">Toxin Av2-2</fullName>
    </alternativeName>
</protein>
<keyword id="KW-0165">Cleavage on pair of basic residues</keyword>
<keyword id="KW-1015">Disulfide bond</keyword>
<keyword id="KW-0872">Ion channel impairing toxin</keyword>
<keyword id="KW-0166">Nematocyst</keyword>
<keyword id="KW-0528">Neurotoxin</keyword>
<keyword id="KW-0964">Secreted</keyword>
<keyword id="KW-0732">Signal</keyword>
<keyword id="KW-0800">Toxin</keyword>
<keyword id="KW-0738">Voltage-gated sodium channel impairing toxin</keyword>
<dbReference type="EMBL" id="EU124448">
    <property type="protein sequence ID" value="ABW97327.1"/>
    <property type="molecule type" value="Genomic_DNA"/>
</dbReference>
<dbReference type="SMR" id="P0DL50"/>
<dbReference type="GO" id="GO:0005576">
    <property type="term" value="C:extracellular region"/>
    <property type="evidence" value="ECO:0007669"/>
    <property type="project" value="UniProtKB-SubCell"/>
</dbReference>
<dbReference type="GO" id="GO:0042151">
    <property type="term" value="C:nematocyst"/>
    <property type="evidence" value="ECO:0007669"/>
    <property type="project" value="UniProtKB-SubCell"/>
</dbReference>
<dbReference type="GO" id="GO:0017080">
    <property type="term" value="F:sodium channel regulator activity"/>
    <property type="evidence" value="ECO:0007669"/>
    <property type="project" value="UniProtKB-KW"/>
</dbReference>
<dbReference type="GO" id="GO:0090729">
    <property type="term" value="F:toxin activity"/>
    <property type="evidence" value="ECO:0007669"/>
    <property type="project" value="UniProtKB-KW"/>
</dbReference>
<dbReference type="Gene3D" id="2.20.20.10">
    <property type="entry name" value="Anthopleurin-A"/>
    <property type="match status" value="1"/>
</dbReference>
<dbReference type="InterPro" id="IPR023355">
    <property type="entry name" value="Myo_ane_neurotoxin_sf"/>
</dbReference>
<dbReference type="Pfam" id="PF00706">
    <property type="entry name" value="Toxin_4"/>
    <property type="match status" value="1"/>
</dbReference>
<dbReference type="SUPFAM" id="SSF57392">
    <property type="entry name" value="Defensin-like"/>
    <property type="match status" value="1"/>
</dbReference>
<name>NA122_ANEVI</name>
<feature type="signal peptide" evidence="2">
    <location>
        <begin position="1"/>
        <end position="21"/>
    </location>
</feature>
<feature type="propeptide" id="PRO_0000433680" evidence="1">
    <location>
        <begin position="22"/>
        <end position="31"/>
    </location>
</feature>
<feature type="chain" id="PRO_5000319683" description="Delta-actitoxin-Avd1c 2">
    <location>
        <begin position="34"/>
        <end position="80"/>
    </location>
</feature>
<feature type="disulfide bond" evidence="1">
    <location>
        <begin position="37"/>
        <end position="77"/>
    </location>
</feature>
<feature type="disulfide bond" evidence="1">
    <location>
        <begin position="39"/>
        <end position="67"/>
    </location>
</feature>
<feature type="disulfide bond" evidence="1">
    <location>
        <begin position="60"/>
        <end position="78"/>
    </location>
</feature>
<feature type="mutagenesis site" description="9.8-fold decrease in binding affinity to cockroach sodium channels and correlated loss of toxicity to blowfly larvae." evidence="3">
    <original>V</original>
    <variation>A</variation>
    <location>
        <position position="35"/>
    </location>
</feature>
<feature type="mutagenesis site" description="27-fold decrease in binding affinity to cockroach sodium channels and correlated loss of toxicity to blowfly larvae. In vivo, slightly affects fish larvae after several hours." evidence="3 5">
    <original>L</original>
    <variation>A</variation>
    <location>
        <position position="38"/>
    </location>
</feature>
<feature type="mutagenesis site" description="317-fold decrease in binding affinity to cockroach sodium channels and correlated loss of toxicity to blowfly larvae." evidence="3">
    <original>D</original>
    <variation>A</variation>
    <location>
        <position position="42"/>
    </location>
</feature>
<feature type="mutagenesis site" description="11-fold decrease in binding affinity to cockroach sodium channels and correlated loss of toxicity to blowfly larvae." evidence="3">
    <original>N</original>
    <variation>A</variation>
    <location>
        <position position="49"/>
    </location>
</feature>
<feature type="mutagenesis site" description="209-fold decrease in binding affinity to cockroach sodium channels and correlated loss of toxicity to blowfly larvae." evidence="3">
    <original>L</original>
    <variation>A</variation>
    <location>
        <position position="51"/>
    </location>
</feature>
<feature type="mutagenesis site" description="16-fold decrease in binding affinity to cockroach sodium channels and correlated loss of toxicity to blowfly larvae." evidence="3">
    <original>I</original>
    <variation>A</variation>
    <location>
        <position position="74"/>
    </location>
</feature>
<accession>P0DL50</accession>
<accession>B1NWR0</accession>
<reference key="1">
    <citation type="journal article" date="2008" name="Mol. Biol. Evol.">
        <title>Concerted evolution of sea anemone neurotoxin genes is revealed through analysis of the Nematostella vectensis genome.</title>
        <authorList>
            <person name="Moran Y."/>
            <person name="Weinberger H."/>
            <person name="Sullivan J.C."/>
            <person name="Reitzel A.M."/>
            <person name="Finnerty J.R."/>
            <person name="Gurevitz M."/>
        </authorList>
    </citation>
    <scope>NUCLEOTIDE SEQUENCE [GENOMIC DNA / MRNA]</scope>
</reference>
<reference key="2">
    <citation type="journal article" date="2006" name="Biochemistry">
        <title>Expression and mutagenesis of the sea anemone toxin Av2 reveals key amino acid residues important for activity on voltage-gated sodium channels.</title>
        <authorList>
            <person name="Moran Y."/>
            <person name="Cohen L."/>
            <person name="Kahn R."/>
            <person name="Karbat I."/>
            <person name="Gordon D."/>
            <person name="Gurevitz M."/>
        </authorList>
    </citation>
    <scope>MUTAGENESIS OF VAL-35; LEU-38; ASP-42; ASN-49; LEU-51 AND ILE-74</scope>
    <scope>TOXIC DOSE</scope>
</reference>
<reference key="3">
    <citation type="journal article" date="2012" name="Proc. R. Soc. B">
        <title>Neurotoxin localization to ectodermal gland cells uncovers an alternative mechanism of venom delivery in sea anemones.</title>
        <authorList>
            <person name="Moran Y."/>
            <person name="Genikhovich G."/>
            <person name="Gordon D."/>
            <person name="Wienkoop S."/>
            <person name="Zenkert C."/>
            <person name="Ozbek S."/>
            <person name="Technau U."/>
            <person name="Gurevitz M."/>
        </authorList>
    </citation>
    <scope>FUNCTION</scope>
    <scope>SUBCELLULAR LOCATION</scope>
    <scope>TISSUE SPECIFICITY</scope>
    <scope>MUTAGENESIS OF LEU-38</scope>
</reference>
<reference key="4">
    <citation type="journal article" date="2012" name="Toxicon">
        <title>Development of a rational nomenclature for naming peptide and protein toxins from sea anemones.</title>
        <authorList>
            <person name="Oliveira J.S."/>
            <person name="Fuentes-Silva D."/>
            <person name="King G.F."/>
        </authorList>
    </citation>
    <scope>NOMENCLATURE</scope>
</reference>
<evidence type="ECO:0000250" key="1">
    <source>
        <dbReference type="UniProtKB" id="P01528"/>
    </source>
</evidence>
<evidence type="ECO:0000255" key="2"/>
<evidence type="ECO:0000269" key="3">
    <source>
    </source>
</evidence>
<evidence type="ECO:0000269" key="4">
    <source>
    </source>
</evidence>
<evidence type="ECO:0000269" key="5">
    <source>
    </source>
</evidence>
<evidence type="ECO:0000303" key="6">
    <source>
    </source>
</evidence>
<evidence type="ECO:0000303" key="7">
    <source>
    </source>
</evidence>
<evidence type="ECO:0000305" key="8"/>
<evidence type="ECO:0000305" key="9">
    <source>
    </source>
</evidence>
<evidence type="ECO:0000312" key="10">
    <source>
        <dbReference type="EMBL" id="ABW97327.1"/>
    </source>
</evidence>
<comment type="function">
    <text evidence="1 5">Binds specifically to voltage-gated sodium channels (Nav) (site 3), thereby delaying their inactivation during signal transduction (By similarity). Has a strong effect on crustaceans and insects and a weaker effect on mammals (By similarity). It strongly inhibits D.melanogaster sodium channel (DmNav1) (By similarity). It strongly affects the heart sodium channels (Nav1.5/SCN5A) and weakly inhibits the brain sodium channel Nav1.2/SCN2A (By similarity). In vivo, when released into the medium, this recombinant toxin induces impaired swimming, paralysis and death of the crustacean A.nauplii within several hours (PubMed:22048953). Its effect on zebrafish (D.rerio) larvae is much faster, since it induces paralysis or strong convulsion and impaired swimming, within 10 minutes (PubMed:22048953).</text>
</comment>
<comment type="subcellular location">
    <subcellularLocation>
        <location evidence="9">Secreted</location>
    </subcellularLocation>
    <subcellularLocation>
        <location evidence="9">Nematocyst</location>
    </subcellularLocation>
    <text evidence="9">In nematocyst, is associated with the tubule prior to discharge.</text>
</comment>
<comment type="tissue specificity">
    <text evidence="9">Expressed in gland cells and nematocytes.</text>
</comment>
<comment type="toxic dose">
    <text evidence="3">Dose that immobilizes and contracts insects (ED(50)) is 3.7 pmol/g body weight when intersegmentally injected into S.falculata.</text>
</comment>
<comment type="miscellaneous">
    <text evidence="4">This protein is encoded by at least 3 different genes. At least 3 other genes code for a similar Av2 with an Ile (instead a Val) at position 35.</text>
</comment>
<comment type="similarity">
    <text evidence="8">Belongs to the sea anemone sodium channel inhibitory toxin family. Type I subfamily.</text>
</comment>
<comment type="caution">
    <text evidence="8">Opinions are divided on whether Anemonia viridis (Forsskal, 1775) and Anemonia sulcata (Pennant, 1777) are separate species.</text>
</comment>
<proteinExistence type="evidence at protein level"/>